<organism>
    <name type="scientific">Halorhodospira halophila (strain DSM 244 / SL1)</name>
    <name type="common">Ectothiorhodospira halophila (strain DSM 244 / SL1)</name>
    <dbReference type="NCBI Taxonomy" id="349124"/>
    <lineage>
        <taxon>Bacteria</taxon>
        <taxon>Pseudomonadati</taxon>
        <taxon>Pseudomonadota</taxon>
        <taxon>Gammaproteobacteria</taxon>
        <taxon>Chromatiales</taxon>
        <taxon>Ectothiorhodospiraceae</taxon>
        <taxon>Halorhodospira</taxon>
    </lineage>
</organism>
<accession>A1WY50</accession>
<protein>
    <recommendedName>
        <fullName evidence="1">Large ribosomal subunit protein bL21</fullName>
    </recommendedName>
    <alternativeName>
        <fullName evidence="3">50S ribosomal protein L21</fullName>
    </alternativeName>
</protein>
<sequence>MYAVIRSGGKQYRVSEGDVLRVEKLPAEVGETVQFDDVLMVGSGSEVKIGTPHVEGGSVKAEVLEQDRHRKVEVTKFKRRQGYRRHHGHRQPYTQVKITGISAG</sequence>
<name>RL21_HALHL</name>
<keyword id="KW-1185">Reference proteome</keyword>
<keyword id="KW-0687">Ribonucleoprotein</keyword>
<keyword id="KW-0689">Ribosomal protein</keyword>
<keyword id="KW-0694">RNA-binding</keyword>
<keyword id="KW-0699">rRNA-binding</keyword>
<reference key="1">
    <citation type="submission" date="2006-12" db="EMBL/GenBank/DDBJ databases">
        <title>Complete sequence of Halorhodospira halophila SL1.</title>
        <authorList>
            <consortium name="US DOE Joint Genome Institute"/>
            <person name="Copeland A."/>
            <person name="Lucas S."/>
            <person name="Lapidus A."/>
            <person name="Barry K."/>
            <person name="Detter J.C."/>
            <person name="Glavina del Rio T."/>
            <person name="Hammon N."/>
            <person name="Israni S."/>
            <person name="Dalin E."/>
            <person name="Tice H."/>
            <person name="Pitluck S."/>
            <person name="Saunders E."/>
            <person name="Brettin T."/>
            <person name="Bruce D."/>
            <person name="Han C."/>
            <person name="Tapia R."/>
            <person name="Schmutz J."/>
            <person name="Larimer F."/>
            <person name="Land M."/>
            <person name="Hauser L."/>
            <person name="Kyrpides N."/>
            <person name="Mikhailova N."/>
            <person name="Hoff W."/>
            <person name="Richardson P."/>
        </authorList>
    </citation>
    <scope>NUCLEOTIDE SEQUENCE [LARGE SCALE GENOMIC DNA]</scope>
    <source>
        <strain>DSM 244 / SL1</strain>
    </source>
</reference>
<evidence type="ECO:0000255" key="1">
    <source>
        <dbReference type="HAMAP-Rule" id="MF_01363"/>
    </source>
</evidence>
<evidence type="ECO:0000256" key="2">
    <source>
        <dbReference type="SAM" id="MobiDB-lite"/>
    </source>
</evidence>
<evidence type="ECO:0000305" key="3"/>
<feature type="chain" id="PRO_1000067840" description="Large ribosomal subunit protein bL21">
    <location>
        <begin position="1"/>
        <end position="104"/>
    </location>
</feature>
<feature type="region of interest" description="Disordered" evidence="2">
    <location>
        <begin position="81"/>
        <end position="104"/>
    </location>
</feature>
<feature type="compositionally biased region" description="Basic residues" evidence="2">
    <location>
        <begin position="81"/>
        <end position="90"/>
    </location>
</feature>
<dbReference type="EMBL" id="CP000544">
    <property type="protein sequence ID" value="ABM62612.1"/>
    <property type="molecule type" value="Genomic_DNA"/>
</dbReference>
<dbReference type="RefSeq" id="WP_011814634.1">
    <property type="nucleotide sequence ID" value="NC_008789.1"/>
</dbReference>
<dbReference type="SMR" id="A1WY50"/>
<dbReference type="STRING" id="349124.Hhal_1848"/>
<dbReference type="KEGG" id="hha:Hhal_1848"/>
<dbReference type="eggNOG" id="COG0261">
    <property type="taxonomic scope" value="Bacteria"/>
</dbReference>
<dbReference type="HOGENOM" id="CLU_061463_3_2_6"/>
<dbReference type="OrthoDB" id="9813334at2"/>
<dbReference type="Proteomes" id="UP000000647">
    <property type="component" value="Chromosome"/>
</dbReference>
<dbReference type="GO" id="GO:0005737">
    <property type="term" value="C:cytoplasm"/>
    <property type="evidence" value="ECO:0007669"/>
    <property type="project" value="UniProtKB-ARBA"/>
</dbReference>
<dbReference type="GO" id="GO:1990904">
    <property type="term" value="C:ribonucleoprotein complex"/>
    <property type="evidence" value="ECO:0007669"/>
    <property type="project" value="UniProtKB-KW"/>
</dbReference>
<dbReference type="GO" id="GO:0005840">
    <property type="term" value="C:ribosome"/>
    <property type="evidence" value="ECO:0007669"/>
    <property type="project" value="UniProtKB-KW"/>
</dbReference>
<dbReference type="GO" id="GO:0019843">
    <property type="term" value="F:rRNA binding"/>
    <property type="evidence" value="ECO:0007669"/>
    <property type="project" value="UniProtKB-UniRule"/>
</dbReference>
<dbReference type="GO" id="GO:0003735">
    <property type="term" value="F:structural constituent of ribosome"/>
    <property type="evidence" value="ECO:0007669"/>
    <property type="project" value="InterPro"/>
</dbReference>
<dbReference type="GO" id="GO:0006412">
    <property type="term" value="P:translation"/>
    <property type="evidence" value="ECO:0007669"/>
    <property type="project" value="UniProtKB-UniRule"/>
</dbReference>
<dbReference type="HAMAP" id="MF_01363">
    <property type="entry name" value="Ribosomal_bL21"/>
    <property type="match status" value="1"/>
</dbReference>
<dbReference type="InterPro" id="IPR028909">
    <property type="entry name" value="bL21-like"/>
</dbReference>
<dbReference type="InterPro" id="IPR036164">
    <property type="entry name" value="bL21-like_sf"/>
</dbReference>
<dbReference type="InterPro" id="IPR001787">
    <property type="entry name" value="Ribosomal_bL21"/>
</dbReference>
<dbReference type="NCBIfam" id="TIGR00061">
    <property type="entry name" value="L21"/>
    <property type="match status" value="1"/>
</dbReference>
<dbReference type="PANTHER" id="PTHR21349">
    <property type="entry name" value="50S RIBOSOMAL PROTEIN L21"/>
    <property type="match status" value="1"/>
</dbReference>
<dbReference type="PANTHER" id="PTHR21349:SF0">
    <property type="entry name" value="LARGE RIBOSOMAL SUBUNIT PROTEIN BL21M"/>
    <property type="match status" value="1"/>
</dbReference>
<dbReference type="Pfam" id="PF00829">
    <property type="entry name" value="Ribosomal_L21p"/>
    <property type="match status" value="1"/>
</dbReference>
<dbReference type="SUPFAM" id="SSF141091">
    <property type="entry name" value="L21p-like"/>
    <property type="match status" value="1"/>
</dbReference>
<proteinExistence type="inferred from homology"/>
<comment type="function">
    <text evidence="1">This protein binds to 23S rRNA in the presence of protein L20.</text>
</comment>
<comment type="subunit">
    <text evidence="1">Part of the 50S ribosomal subunit. Contacts protein L20.</text>
</comment>
<comment type="similarity">
    <text evidence="1">Belongs to the bacterial ribosomal protein bL21 family.</text>
</comment>
<gene>
    <name evidence="1" type="primary">rplU</name>
    <name type="ordered locus">Hhal_1848</name>
</gene>